<comment type="function">
    <text evidence="1">Negatively regulates post-translational modifications of tubulin, including detyrosination of the C-terminus and polyglutamylation of glutamate residues. Also, indirectly promotes histone H4 trimethylation at 'Lys-20' (H4K20me3). Probably by controlling tubulin and/or histone H4 post-translational modifications, plays a role in mitosis and in maintaining chromosome number stability. During RNA virus-mediated infection, acts as a negative regulator of the RIG-I pathway by preventing MAVS binding to TBK1 and IKBKE.</text>
</comment>
<comment type="subunit">
    <text evidence="1">Interacts with MAVS; the interaction prevents MAVS binding to TBK1 and IKBKE. Interacts (via N-terminus) with TBK1 (via protein kinase domain). Interacts (via TTL domain) with IKBKE (via protein kinase domain). Interacts with tubulin alpha. Interacts with histone H3 and histone H4 (when trimethylated at 'Lys-20' (H4K20me3)). Interacts with CBX3.</text>
</comment>
<comment type="subcellular location">
    <subcellularLocation>
        <location evidence="1">Cytoplasm</location>
    </subcellularLocation>
    <subcellularLocation>
        <location evidence="1">Midbody</location>
    </subcellularLocation>
    <subcellularLocation>
        <location evidence="1">Cytoplasm</location>
        <location evidence="1">Cytoskeleton</location>
        <location evidence="1">Microtubule organizing center</location>
        <location evidence="1">Centrosome</location>
    </subcellularLocation>
    <subcellularLocation>
        <location evidence="1">Cytoplasm</location>
        <location evidence="1">Cytoskeleton</location>
        <location evidence="1">Spindle</location>
    </subcellularLocation>
    <subcellularLocation>
        <location evidence="1">Nucleus</location>
    </subcellularLocation>
    <text evidence="1">Predominantly localizes in the cytoplasm.</text>
</comment>
<comment type="tissue specificity">
    <text evidence="4">Widely expressed with highest levels in brain, kidney, liver, lung, muscle and testis.</text>
</comment>
<comment type="similarity">
    <text evidence="5">Belongs to the tubulin--tyrosine ligase family.</text>
</comment>
<comment type="caution">
    <text evidence="1 4">Although it belongs to the tubulin--tyrosine ligase family, the TTL domain lacks some of the ATP binding sites predicted to be essential for TTL activity (By similarity). Lacks tyrosine ligase activity in vitro (By similarity). Lacks glutamylation activity in vitro (PubMed:17499049). Although TTLL12 contains a potential SET-like domain in the N-terminus, it does not have lysine methyltransferase activity towards histone in vitro (By similarity).</text>
</comment>
<name>TTL12_MOUSE</name>
<proteinExistence type="evidence at protein level"/>
<protein>
    <recommendedName>
        <fullName>Tubulin--tyrosine ligase-like protein 12</fullName>
    </recommendedName>
    <alternativeName>
        <fullName evidence="5">Inactive tubulin--tyrosine ligase-like protein 12</fullName>
    </alternativeName>
</protein>
<organism>
    <name type="scientific">Mus musculus</name>
    <name type="common">Mouse</name>
    <dbReference type="NCBI Taxonomy" id="10090"/>
    <lineage>
        <taxon>Eukaryota</taxon>
        <taxon>Metazoa</taxon>
        <taxon>Chordata</taxon>
        <taxon>Craniata</taxon>
        <taxon>Vertebrata</taxon>
        <taxon>Euteleostomi</taxon>
        <taxon>Mammalia</taxon>
        <taxon>Eutheria</taxon>
        <taxon>Euarchontoglires</taxon>
        <taxon>Glires</taxon>
        <taxon>Rodentia</taxon>
        <taxon>Myomorpha</taxon>
        <taxon>Muroidea</taxon>
        <taxon>Muridae</taxon>
        <taxon>Murinae</taxon>
        <taxon>Mus</taxon>
        <taxon>Mus</taxon>
    </lineage>
</organism>
<keyword id="KW-0067">ATP-binding</keyword>
<keyword id="KW-0963">Cytoplasm</keyword>
<keyword id="KW-0206">Cytoskeleton</keyword>
<keyword id="KW-0391">Immunity</keyword>
<keyword id="KW-0399">Innate immunity</keyword>
<keyword id="KW-0547">Nucleotide-binding</keyword>
<keyword id="KW-0539">Nucleus</keyword>
<keyword id="KW-1185">Reference proteome</keyword>
<sequence length="639" mass="74043">MEIQSGPQPGSPGRAERLNARLLDEFVSLHGPTLRASGVPERLWGRLLHKLEHEVFDAGEMFGIMQVEEVEEAEDEAAREAQRKQPNPGGELCYKVIVTSESGVRADDPNSIFLIDHAWTCRVEHARKQLQQVPGLLHRMANLMGIEFHGEVPSPEVVALVLEEMWKFNQTYQLAHGTAEEKVPVWYIMDEFGSRIQHSDMPSFATAPFFYMPQQVAYTLLWPLRDLDTGEEVTRDFAYGEADPLIRKCMLLPWAPADMLDLSFSTPEPPAKYYQAILEENKEKLPLAISPVARPQGHVFRVHCDVQQVLGHLTHPRFTFTDSEADADIFFHFSHFKDYMKLSQESPQVLLNQFPCENLLTVKDCLASIARRAGGPEGPPWLPRTFNLRTELPQFVSYFQHRERRGEDNHWICKPWNLARSLDTHVTNNLHSIIRHRESTPKVVSKYIESPVLFLREDVGNVKFDIRYIVLLRSVRPLRLFAYDVFWLRFSNRPFALDDLDDYEKHFTVMNYDPDVVLKQVHYNEFIPQFEKQYPEFPWSDVQAEIFKAFTELFQVACAKPPPMGLCDYPSSRAMYAIDLMLNWDNHPDGKRVMQPQILEVNFNPDCERACRYHPSFFNDVFSTLFLDETDNCHVTRII</sequence>
<accession>Q3UDE2</accession>
<accession>Q7TPC3</accession>
<evidence type="ECO:0000250" key="1">
    <source>
        <dbReference type="UniProtKB" id="Q14166"/>
    </source>
</evidence>
<evidence type="ECO:0000250" key="2">
    <source>
        <dbReference type="UniProtKB" id="Q6ZT98"/>
    </source>
</evidence>
<evidence type="ECO:0000255" key="3">
    <source>
        <dbReference type="PROSITE-ProRule" id="PRU00568"/>
    </source>
</evidence>
<evidence type="ECO:0000269" key="4">
    <source>
    </source>
</evidence>
<evidence type="ECO:0000305" key="5"/>
<evidence type="ECO:0000312" key="6">
    <source>
        <dbReference type="EMBL" id="AAH55368.1"/>
    </source>
</evidence>
<evidence type="ECO:0000312" key="7">
    <source>
        <dbReference type="EMBL" id="BAE29319.1"/>
    </source>
</evidence>
<evidence type="ECO:0000312" key="8">
    <source>
        <dbReference type="EMBL" id="CAM84333.1"/>
    </source>
</evidence>
<evidence type="ECO:0000312" key="9">
    <source>
        <dbReference type="MGI" id="MGI:3039573"/>
    </source>
</evidence>
<gene>
    <name evidence="9" type="primary">Ttll12</name>
</gene>
<reference evidence="5 8" key="1">
    <citation type="journal article" date="2007" name="Mol. Cell">
        <title>A targeted multienzyme mechanism for selective microtubule polyglutamylation.</title>
        <authorList>
            <person name="van Dijk J."/>
            <person name="Rogowski K."/>
            <person name="Miro J."/>
            <person name="Lacroix B."/>
            <person name="Edde B."/>
            <person name="Janke C."/>
        </authorList>
    </citation>
    <scope>NUCLEOTIDE SEQUENCE [MRNA]</scope>
    <scope>LACK OF POLYGLUTAMASE ACTIVITY</scope>
    <scope>TISSUE SPECIFICITY</scope>
    <source>
        <strain evidence="8">C57BL/6J</strain>
        <tissue evidence="8">Brain</tissue>
    </source>
</reference>
<reference evidence="7" key="2">
    <citation type="journal article" date="2005" name="Science">
        <title>The transcriptional landscape of the mammalian genome.</title>
        <authorList>
            <person name="Carninci P."/>
            <person name="Kasukawa T."/>
            <person name="Katayama S."/>
            <person name="Gough J."/>
            <person name="Frith M.C."/>
            <person name="Maeda N."/>
            <person name="Oyama R."/>
            <person name="Ravasi T."/>
            <person name="Lenhard B."/>
            <person name="Wells C."/>
            <person name="Kodzius R."/>
            <person name="Shimokawa K."/>
            <person name="Bajic V.B."/>
            <person name="Brenner S.E."/>
            <person name="Batalov S."/>
            <person name="Forrest A.R."/>
            <person name="Zavolan M."/>
            <person name="Davis M.J."/>
            <person name="Wilming L.G."/>
            <person name="Aidinis V."/>
            <person name="Allen J.E."/>
            <person name="Ambesi-Impiombato A."/>
            <person name="Apweiler R."/>
            <person name="Aturaliya R.N."/>
            <person name="Bailey T.L."/>
            <person name="Bansal M."/>
            <person name="Baxter L."/>
            <person name="Beisel K.W."/>
            <person name="Bersano T."/>
            <person name="Bono H."/>
            <person name="Chalk A.M."/>
            <person name="Chiu K.P."/>
            <person name="Choudhary V."/>
            <person name="Christoffels A."/>
            <person name="Clutterbuck D.R."/>
            <person name="Crowe M.L."/>
            <person name="Dalla E."/>
            <person name="Dalrymple B.P."/>
            <person name="de Bono B."/>
            <person name="Della Gatta G."/>
            <person name="di Bernardo D."/>
            <person name="Down T."/>
            <person name="Engstrom P."/>
            <person name="Fagiolini M."/>
            <person name="Faulkner G."/>
            <person name="Fletcher C.F."/>
            <person name="Fukushima T."/>
            <person name="Furuno M."/>
            <person name="Futaki S."/>
            <person name="Gariboldi M."/>
            <person name="Georgii-Hemming P."/>
            <person name="Gingeras T.R."/>
            <person name="Gojobori T."/>
            <person name="Green R.E."/>
            <person name="Gustincich S."/>
            <person name="Harbers M."/>
            <person name="Hayashi Y."/>
            <person name="Hensch T.K."/>
            <person name="Hirokawa N."/>
            <person name="Hill D."/>
            <person name="Huminiecki L."/>
            <person name="Iacono M."/>
            <person name="Ikeo K."/>
            <person name="Iwama A."/>
            <person name="Ishikawa T."/>
            <person name="Jakt M."/>
            <person name="Kanapin A."/>
            <person name="Katoh M."/>
            <person name="Kawasawa Y."/>
            <person name="Kelso J."/>
            <person name="Kitamura H."/>
            <person name="Kitano H."/>
            <person name="Kollias G."/>
            <person name="Krishnan S.P."/>
            <person name="Kruger A."/>
            <person name="Kummerfeld S.K."/>
            <person name="Kurochkin I.V."/>
            <person name="Lareau L.F."/>
            <person name="Lazarevic D."/>
            <person name="Lipovich L."/>
            <person name="Liu J."/>
            <person name="Liuni S."/>
            <person name="McWilliam S."/>
            <person name="Madan Babu M."/>
            <person name="Madera M."/>
            <person name="Marchionni L."/>
            <person name="Matsuda H."/>
            <person name="Matsuzawa S."/>
            <person name="Miki H."/>
            <person name="Mignone F."/>
            <person name="Miyake S."/>
            <person name="Morris K."/>
            <person name="Mottagui-Tabar S."/>
            <person name="Mulder N."/>
            <person name="Nakano N."/>
            <person name="Nakauchi H."/>
            <person name="Ng P."/>
            <person name="Nilsson R."/>
            <person name="Nishiguchi S."/>
            <person name="Nishikawa S."/>
            <person name="Nori F."/>
            <person name="Ohara O."/>
            <person name="Okazaki Y."/>
            <person name="Orlando V."/>
            <person name="Pang K.C."/>
            <person name="Pavan W.J."/>
            <person name="Pavesi G."/>
            <person name="Pesole G."/>
            <person name="Petrovsky N."/>
            <person name="Piazza S."/>
            <person name="Reed J."/>
            <person name="Reid J.F."/>
            <person name="Ring B.Z."/>
            <person name="Ringwald M."/>
            <person name="Rost B."/>
            <person name="Ruan Y."/>
            <person name="Salzberg S.L."/>
            <person name="Sandelin A."/>
            <person name="Schneider C."/>
            <person name="Schoenbach C."/>
            <person name="Sekiguchi K."/>
            <person name="Semple C.A."/>
            <person name="Seno S."/>
            <person name="Sessa L."/>
            <person name="Sheng Y."/>
            <person name="Shibata Y."/>
            <person name="Shimada H."/>
            <person name="Shimada K."/>
            <person name="Silva D."/>
            <person name="Sinclair B."/>
            <person name="Sperling S."/>
            <person name="Stupka E."/>
            <person name="Sugiura K."/>
            <person name="Sultana R."/>
            <person name="Takenaka Y."/>
            <person name="Taki K."/>
            <person name="Tammoja K."/>
            <person name="Tan S.L."/>
            <person name="Tang S."/>
            <person name="Taylor M.S."/>
            <person name="Tegner J."/>
            <person name="Teichmann S.A."/>
            <person name="Ueda H.R."/>
            <person name="van Nimwegen E."/>
            <person name="Verardo R."/>
            <person name="Wei C.L."/>
            <person name="Yagi K."/>
            <person name="Yamanishi H."/>
            <person name="Zabarovsky E."/>
            <person name="Zhu S."/>
            <person name="Zimmer A."/>
            <person name="Hide W."/>
            <person name="Bult C."/>
            <person name="Grimmond S.M."/>
            <person name="Teasdale R.D."/>
            <person name="Liu E.T."/>
            <person name="Brusic V."/>
            <person name="Quackenbush J."/>
            <person name="Wahlestedt C."/>
            <person name="Mattick J.S."/>
            <person name="Hume D.A."/>
            <person name="Kai C."/>
            <person name="Sasaki D."/>
            <person name="Tomaru Y."/>
            <person name="Fukuda S."/>
            <person name="Kanamori-Katayama M."/>
            <person name="Suzuki M."/>
            <person name="Aoki J."/>
            <person name="Arakawa T."/>
            <person name="Iida J."/>
            <person name="Imamura K."/>
            <person name="Itoh M."/>
            <person name="Kato T."/>
            <person name="Kawaji H."/>
            <person name="Kawagashira N."/>
            <person name="Kawashima T."/>
            <person name="Kojima M."/>
            <person name="Kondo S."/>
            <person name="Konno H."/>
            <person name="Nakano K."/>
            <person name="Ninomiya N."/>
            <person name="Nishio T."/>
            <person name="Okada M."/>
            <person name="Plessy C."/>
            <person name="Shibata K."/>
            <person name="Shiraki T."/>
            <person name="Suzuki S."/>
            <person name="Tagami M."/>
            <person name="Waki K."/>
            <person name="Watahiki A."/>
            <person name="Okamura-Oho Y."/>
            <person name="Suzuki H."/>
            <person name="Kawai J."/>
            <person name="Hayashizaki Y."/>
        </authorList>
    </citation>
    <scope>NUCLEOTIDE SEQUENCE [LARGE SCALE MRNA]</scope>
    <source>
        <strain evidence="7">C57BL/6J</strain>
        <tissue evidence="7">Bone marrow</tissue>
    </source>
</reference>
<reference key="3">
    <citation type="journal article" date="2009" name="PLoS Biol.">
        <title>Lineage-specific biology revealed by a finished genome assembly of the mouse.</title>
        <authorList>
            <person name="Church D.M."/>
            <person name="Goodstadt L."/>
            <person name="Hillier L.W."/>
            <person name="Zody M.C."/>
            <person name="Goldstein S."/>
            <person name="She X."/>
            <person name="Bult C.J."/>
            <person name="Agarwala R."/>
            <person name="Cherry J.L."/>
            <person name="DiCuccio M."/>
            <person name="Hlavina W."/>
            <person name="Kapustin Y."/>
            <person name="Meric P."/>
            <person name="Maglott D."/>
            <person name="Birtle Z."/>
            <person name="Marques A.C."/>
            <person name="Graves T."/>
            <person name="Zhou S."/>
            <person name="Teague B."/>
            <person name="Potamousis K."/>
            <person name="Churas C."/>
            <person name="Place M."/>
            <person name="Herschleb J."/>
            <person name="Runnheim R."/>
            <person name="Forrest D."/>
            <person name="Amos-Landgraf J."/>
            <person name="Schwartz D.C."/>
            <person name="Cheng Z."/>
            <person name="Lindblad-Toh K."/>
            <person name="Eichler E.E."/>
            <person name="Ponting C.P."/>
        </authorList>
    </citation>
    <scope>NUCLEOTIDE SEQUENCE [LARGE SCALE GENOMIC DNA]</scope>
    <source>
        <strain>C57BL/6J</strain>
    </source>
</reference>
<reference evidence="6" key="4">
    <citation type="journal article" date="2004" name="Genome Res.">
        <title>The status, quality, and expansion of the NIH full-length cDNA project: the Mammalian Gene Collection (MGC).</title>
        <authorList>
            <consortium name="The MGC Project Team"/>
        </authorList>
    </citation>
    <scope>NUCLEOTIDE SEQUENCE [LARGE SCALE MRNA]</scope>
    <source>
        <strain evidence="6">C3H/He</strain>
        <tissue evidence="6">Osteoblast</tissue>
    </source>
</reference>
<reference key="5">
    <citation type="journal article" date="2010" name="Cell">
        <title>A tissue-specific atlas of mouse protein phosphorylation and expression.</title>
        <authorList>
            <person name="Huttlin E.L."/>
            <person name="Jedrychowski M.P."/>
            <person name="Elias J.E."/>
            <person name="Goswami T."/>
            <person name="Rad R."/>
            <person name="Beausoleil S.A."/>
            <person name="Villen J."/>
            <person name="Haas W."/>
            <person name="Sowa M.E."/>
            <person name="Gygi S.P."/>
        </authorList>
    </citation>
    <scope>IDENTIFICATION BY MASS SPECTROMETRY [LARGE SCALE ANALYSIS]</scope>
    <source>
        <tissue>Brain</tissue>
        <tissue>Brown adipose tissue</tissue>
        <tissue>Heart</tissue>
        <tissue>Kidney</tissue>
        <tissue>Liver</tissue>
        <tissue>Lung</tissue>
        <tissue>Pancreas</tissue>
        <tissue>Spleen</tissue>
        <tissue>Testis</tissue>
    </source>
</reference>
<feature type="chain" id="PRO_0000326166" description="Tubulin--tyrosine ligase-like protein 12">
    <location>
        <begin position="1"/>
        <end position="639"/>
    </location>
</feature>
<feature type="domain" description="TTL" evidence="3">
    <location>
        <begin position="295"/>
        <end position="639"/>
    </location>
</feature>
<feature type="binding site" evidence="2">
    <location>
        <begin position="445"/>
        <end position="448"/>
    </location>
    <ligand>
        <name>ATP</name>
        <dbReference type="ChEBI" id="CHEBI:30616"/>
    </ligand>
</feature>
<feature type="binding site" evidence="2">
    <location>
        <position position="463"/>
    </location>
    <ligand>
        <name>ATP</name>
        <dbReference type="ChEBI" id="CHEBI:30616"/>
    </ligand>
</feature>
<feature type="binding site" evidence="2">
    <location>
        <position position="465"/>
    </location>
    <ligand>
        <name>ATP</name>
        <dbReference type="ChEBI" id="CHEBI:30616"/>
    </ligand>
</feature>
<feature type="sequence conflict" description="In Ref. 4; AAH55368." evidence="5" ref="4">
    <original>M</original>
    <variation>K</variation>
    <location>
        <position position="65"/>
    </location>
</feature>
<dbReference type="EMBL" id="AM690756">
    <property type="protein sequence ID" value="CAM84333.1"/>
    <property type="molecule type" value="mRNA"/>
</dbReference>
<dbReference type="EMBL" id="AK150116">
    <property type="protein sequence ID" value="BAE29319.1"/>
    <property type="molecule type" value="mRNA"/>
</dbReference>
<dbReference type="EMBL" id="AL583887">
    <property type="status" value="NOT_ANNOTATED_CDS"/>
    <property type="molecule type" value="Genomic_DNA"/>
</dbReference>
<dbReference type="EMBL" id="BC055368">
    <property type="protein sequence ID" value="AAH55368.1"/>
    <property type="molecule type" value="mRNA"/>
</dbReference>
<dbReference type="CCDS" id="CCDS27706.1"/>
<dbReference type="RefSeq" id="NP_898838.2">
    <property type="nucleotide sequence ID" value="NM_183017.2"/>
</dbReference>
<dbReference type="SMR" id="Q3UDE2"/>
<dbReference type="BioGRID" id="230183">
    <property type="interactions" value="24"/>
</dbReference>
<dbReference type="FunCoup" id="Q3UDE2">
    <property type="interactions" value="3148"/>
</dbReference>
<dbReference type="IntAct" id="Q3UDE2">
    <property type="interactions" value="17"/>
</dbReference>
<dbReference type="MINT" id="Q3UDE2"/>
<dbReference type="STRING" id="10090.ENSMUSP00000016901"/>
<dbReference type="iPTMnet" id="Q3UDE2"/>
<dbReference type="PhosphoSitePlus" id="Q3UDE2"/>
<dbReference type="SwissPalm" id="Q3UDE2"/>
<dbReference type="jPOST" id="Q3UDE2"/>
<dbReference type="PaxDb" id="10090-ENSMUSP00000016901"/>
<dbReference type="PeptideAtlas" id="Q3UDE2"/>
<dbReference type="ProteomicsDB" id="297751"/>
<dbReference type="Pumba" id="Q3UDE2"/>
<dbReference type="Antibodypedia" id="27494">
    <property type="antibodies" value="278 antibodies from 18 providers"/>
</dbReference>
<dbReference type="Ensembl" id="ENSMUST00000016901.5">
    <property type="protein sequence ID" value="ENSMUSP00000016901.4"/>
    <property type="gene ID" value="ENSMUSG00000016757.12"/>
</dbReference>
<dbReference type="GeneID" id="223723"/>
<dbReference type="KEGG" id="mmu:223723"/>
<dbReference type="UCSC" id="uc007xbh.2">
    <property type="organism name" value="mouse"/>
</dbReference>
<dbReference type="AGR" id="MGI:3039573"/>
<dbReference type="CTD" id="23170"/>
<dbReference type="MGI" id="MGI:3039573">
    <property type="gene designation" value="Ttll12"/>
</dbReference>
<dbReference type="VEuPathDB" id="HostDB:ENSMUSG00000016757"/>
<dbReference type="eggNOG" id="KOG2155">
    <property type="taxonomic scope" value="Eukaryota"/>
</dbReference>
<dbReference type="GeneTree" id="ENSGT00390000006760"/>
<dbReference type="HOGENOM" id="CLU_018324_0_0_1"/>
<dbReference type="InParanoid" id="Q3UDE2"/>
<dbReference type="OMA" id="WTPDCKR"/>
<dbReference type="OrthoDB" id="60477at2759"/>
<dbReference type="PhylomeDB" id="Q3UDE2"/>
<dbReference type="TreeFam" id="TF313037"/>
<dbReference type="Reactome" id="R-MMU-8955332">
    <property type="pathway name" value="Carboxyterminal post-translational modifications of tubulin"/>
</dbReference>
<dbReference type="BioGRID-ORCS" id="223723">
    <property type="hits" value="4 hits in 77 CRISPR screens"/>
</dbReference>
<dbReference type="ChiTaRS" id="Ttll12">
    <property type="organism name" value="mouse"/>
</dbReference>
<dbReference type="PRO" id="PR:Q3UDE2"/>
<dbReference type="Proteomes" id="UP000000589">
    <property type="component" value="Chromosome 15"/>
</dbReference>
<dbReference type="RNAct" id="Q3UDE2">
    <property type="molecule type" value="protein"/>
</dbReference>
<dbReference type="Bgee" id="ENSMUSG00000016757">
    <property type="expression patterns" value="Expressed in ectoplacental cone and 227 other cell types or tissues"/>
</dbReference>
<dbReference type="ExpressionAtlas" id="Q3UDE2">
    <property type="expression patterns" value="baseline and differential"/>
</dbReference>
<dbReference type="GO" id="GO:0005813">
    <property type="term" value="C:centrosome"/>
    <property type="evidence" value="ECO:0007669"/>
    <property type="project" value="UniProtKB-SubCell"/>
</dbReference>
<dbReference type="GO" id="GO:0005829">
    <property type="term" value="C:cytosol"/>
    <property type="evidence" value="ECO:0007669"/>
    <property type="project" value="Ensembl"/>
</dbReference>
<dbReference type="GO" id="GO:0030496">
    <property type="term" value="C:midbody"/>
    <property type="evidence" value="ECO:0007669"/>
    <property type="project" value="UniProtKB-SubCell"/>
</dbReference>
<dbReference type="GO" id="GO:0005634">
    <property type="term" value="C:nucleus"/>
    <property type="evidence" value="ECO:0007669"/>
    <property type="project" value="UniProtKB-SubCell"/>
</dbReference>
<dbReference type="GO" id="GO:0005886">
    <property type="term" value="C:plasma membrane"/>
    <property type="evidence" value="ECO:0007669"/>
    <property type="project" value="Ensembl"/>
</dbReference>
<dbReference type="GO" id="GO:0005819">
    <property type="term" value="C:spindle"/>
    <property type="evidence" value="ECO:0007669"/>
    <property type="project" value="UniProtKB-SubCell"/>
</dbReference>
<dbReference type="GO" id="GO:0016881">
    <property type="term" value="F:acid-amino acid ligase activity"/>
    <property type="evidence" value="ECO:0007669"/>
    <property type="project" value="UniProtKB-ARBA"/>
</dbReference>
<dbReference type="GO" id="GO:0005524">
    <property type="term" value="F:ATP binding"/>
    <property type="evidence" value="ECO:0007669"/>
    <property type="project" value="UniProtKB-KW"/>
</dbReference>
<dbReference type="GO" id="GO:0140096">
    <property type="term" value="F:catalytic activity, acting on a protein"/>
    <property type="evidence" value="ECO:0007669"/>
    <property type="project" value="UniProtKB-ARBA"/>
</dbReference>
<dbReference type="GO" id="GO:0140005">
    <property type="term" value="F:histone H4K20me2 reader activity"/>
    <property type="evidence" value="ECO:0007669"/>
    <property type="project" value="Ensembl"/>
</dbReference>
<dbReference type="GO" id="GO:0045087">
    <property type="term" value="P:innate immune response"/>
    <property type="evidence" value="ECO:0007669"/>
    <property type="project" value="UniProtKB-KW"/>
</dbReference>
<dbReference type="GO" id="GO:0060339">
    <property type="term" value="P:negative regulation of type I interferon-mediated signaling pathway"/>
    <property type="evidence" value="ECO:0007669"/>
    <property type="project" value="Ensembl"/>
</dbReference>
<dbReference type="GO" id="GO:0036211">
    <property type="term" value="P:protein modification process"/>
    <property type="evidence" value="ECO:0007669"/>
    <property type="project" value="InterPro"/>
</dbReference>
<dbReference type="GO" id="GO:0007346">
    <property type="term" value="P:regulation of mitotic cell cycle"/>
    <property type="evidence" value="ECO:0007669"/>
    <property type="project" value="Ensembl"/>
</dbReference>
<dbReference type="Gene3D" id="3.30.470.20">
    <property type="entry name" value="ATP-grasp fold, B domain"/>
    <property type="match status" value="1"/>
</dbReference>
<dbReference type="InterPro" id="IPR004344">
    <property type="entry name" value="TTL/TTLL_fam"/>
</dbReference>
<dbReference type="InterPro" id="IPR027749">
    <property type="entry name" value="TTLL12"/>
</dbReference>
<dbReference type="PANTHER" id="PTHR46088">
    <property type="entry name" value="TUBULIN--TYROSINE LIGASE-LIKE PROTEIN 12"/>
    <property type="match status" value="1"/>
</dbReference>
<dbReference type="PANTHER" id="PTHR46088:SF1">
    <property type="entry name" value="TUBULIN--TYROSINE LIGASE-LIKE PROTEIN 12"/>
    <property type="match status" value="1"/>
</dbReference>
<dbReference type="Pfam" id="PF03133">
    <property type="entry name" value="TTL"/>
    <property type="match status" value="1"/>
</dbReference>
<dbReference type="PROSITE" id="PS51221">
    <property type="entry name" value="TTL"/>
    <property type="match status" value="1"/>
</dbReference>